<dbReference type="SMR" id="G1TZA0"/>
<dbReference type="FunCoup" id="G1TZA0">
    <property type="interactions" value="3"/>
</dbReference>
<dbReference type="STRING" id="9986.ENSOCUP00000022422"/>
<dbReference type="SwissPalm" id="G1TZA0"/>
<dbReference type="PaxDb" id="9986-ENSOCUP00000022422"/>
<dbReference type="eggNOG" id="ENOG502S5XM">
    <property type="taxonomic scope" value="Eukaryota"/>
</dbReference>
<dbReference type="HOGENOM" id="CLU_171208_2_0_1"/>
<dbReference type="InParanoid" id="G1TZA0"/>
<dbReference type="OMA" id="PFNYDYH"/>
<dbReference type="TreeFam" id="TF333443"/>
<dbReference type="Proteomes" id="UP000001811">
    <property type="component" value="Unplaced"/>
</dbReference>
<dbReference type="GO" id="GO:0016324">
    <property type="term" value="C:apical plasma membrane"/>
    <property type="evidence" value="ECO:0007669"/>
    <property type="project" value="UniProtKB-SubCell"/>
</dbReference>
<dbReference type="GO" id="GO:0005901">
    <property type="term" value="C:caveola"/>
    <property type="evidence" value="ECO:0000250"/>
    <property type="project" value="UniProtKB"/>
</dbReference>
<dbReference type="GO" id="GO:0014704">
    <property type="term" value="C:intercalated disc"/>
    <property type="evidence" value="ECO:0000250"/>
    <property type="project" value="UniProtKB"/>
</dbReference>
<dbReference type="GO" id="GO:0030315">
    <property type="term" value="C:T-tubule"/>
    <property type="evidence" value="ECO:0000250"/>
    <property type="project" value="UniProtKB"/>
</dbReference>
<dbReference type="GO" id="GO:0017080">
    <property type="term" value="F:sodium channel regulator activity"/>
    <property type="evidence" value="ECO:0007669"/>
    <property type="project" value="TreeGrafter"/>
</dbReference>
<dbReference type="GO" id="GO:0010734">
    <property type="term" value="P:negative regulation of protein glutathionylation"/>
    <property type="evidence" value="ECO:0000250"/>
    <property type="project" value="UniProtKB"/>
</dbReference>
<dbReference type="GO" id="GO:0006813">
    <property type="term" value="P:potassium ion transport"/>
    <property type="evidence" value="ECO:0007669"/>
    <property type="project" value="UniProtKB-KW"/>
</dbReference>
<dbReference type="GO" id="GO:0043269">
    <property type="term" value="P:regulation of monoatomic ion transport"/>
    <property type="evidence" value="ECO:0007669"/>
    <property type="project" value="InterPro"/>
</dbReference>
<dbReference type="GO" id="GO:0006814">
    <property type="term" value="P:sodium ion transport"/>
    <property type="evidence" value="ECO:0007669"/>
    <property type="project" value="UniProtKB-KW"/>
</dbReference>
<dbReference type="CDD" id="cd20317">
    <property type="entry name" value="FXYD1"/>
    <property type="match status" value="1"/>
</dbReference>
<dbReference type="FunFam" id="1.20.5.780:FF:000002">
    <property type="entry name" value="FXYD domain-containing ion transport regulator"/>
    <property type="match status" value="1"/>
</dbReference>
<dbReference type="Gene3D" id="1.20.5.780">
    <property type="entry name" value="Single helix bin"/>
    <property type="match status" value="1"/>
</dbReference>
<dbReference type="InterPro" id="IPR047297">
    <property type="entry name" value="FXYD_motif"/>
</dbReference>
<dbReference type="InterPro" id="IPR000272">
    <property type="entry name" value="Ion-transport_regulator_FXYD"/>
</dbReference>
<dbReference type="InterPro" id="IPR047281">
    <property type="entry name" value="PLM"/>
</dbReference>
<dbReference type="PANTHER" id="PTHR14132:SF12">
    <property type="entry name" value="PHOSPHOLEMMAN"/>
    <property type="match status" value="1"/>
</dbReference>
<dbReference type="PANTHER" id="PTHR14132">
    <property type="entry name" value="SODIUM/POTASSIUM-TRANSPORTING ATPASE SUBUNIT GAMMA"/>
    <property type="match status" value="1"/>
</dbReference>
<dbReference type="Pfam" id="PF02038">
    <property type="entry name" value="ATP1G1_PLM_MAT8"/>
    <property type="match status" value="1"/>
</dbReference>
<dbReference type="PROSITE" id="PS01310">
    <property type="entry name" value="FXYD"/>
    <property type="match status" value="1"/>
</dbReference>
<proteinExistence type="evidence at protein level"/>
<keyword id="KW-1003">Cell membrane</keyword>
<keyword id="KW-0318">Glutathionylation</keyword>
<keyword id="KW-0406">Ion transport</keyword>
<keyword id="KW-0449">Lipoprotein</keyword>
<keyword id="KW-0472">Membrane</keyword>
<keyword id="KW-0564">Palmitate</keyword>
<keyword id="KW-0597">Phosphoprotein</keyword>
<keyword id="KW-0630">Potassium</keyword>
<keyword id="KW-0633">Potassium transport</keyword>
<keyword id="KW-1185">Reference proteome</keyword>
<keyword id="KW-0732">Signal</keyword>
<keyword id="KW-0915">Sodium</keyword>
<keyword id="KW-0739">Sodium transport</keyword>
<keyword id="KW-0740">Sodium/potassium transport</keyword>
<keyword id="KW-0812">Transmembrane</keyword>
<keyword id="KW-1133">Transmembrane helix</keyword>
<keyword id="KW-0813">Transport</keyword>
<name>PLM_RABIT</name>
<accession>G1TZA0</accession>
<feature type="signal peptide" evidence="3">
    <location>
        <begin position="1"/>
        <end position="20"/>
    </location>
</feature>
<feature type="chain" id="PRO_5003423826" description="Phospholemman">
    <location>
        <begin position="21"/>
        <end position="92"/>
    </location>
</feature>
<feature type="topological domain" description="Extracellular" evidence="6">
    <location>
        <begin position="22"/>
        <end position="35"/>
    </location>
</feature>
<feature type="transmembrane region" description="Helical" evidence="6">
    <location>
        <begin position="36"/>
        <end position="56"/>
    </location>
</feature>
<feature type="topological domain" description="Cytoplasmic" evidence="6">
    <location>
        <begin position="57"/>
        <end position="92"/>
    </location>
</feature>
<feature type="region of interest" description="Disordered" evidence="7">
    <location>
        <begin position="67"/>
        <end position="92"/>
    </location>
</feature>
<feature type="compositionally biased region" description="Basic residues" evidence="7">
    <location>
        <begin position="83"/>
        <end position="92"/>
    </location>
</feature>
<feature type="modified residue" description="Phosphothreonine" evidence="5">
    <location>
        <position position="79"/>
    </location>
</feature>
<feature type="modified residue" description="Phosphoserine" evidence="5">
    <location>
        <position position="82"/>
    </location>
</feature>
<feature type="modified residue" description="Phosphoserine; by PKA and PKC" evidence="3">
    <location>
        <position position="83"/>
    </location>
</feature>
<feature type="modified residue" description="Phosphoserine; by PKA" evidence="3">
    <location>
        <position position="88"/>
    </location>
</feature>
<feature type="modified residue" description="Phosphothreonine; by PKC" evidence="3">
    <location>
        <position position="89"/>
    </location>
</feature>
<reference evidence="10" key="1">
    <citation type="submission" date="2009-08" db="EMBL/GenBank/DDBJ databases">
        <title>Genome Sequence of Oryctolagus cuniculus (European rabbit).</title>
        <authorList>
            <consortium name="The Genome Sequencing Platform"/>
            <person name="Di Palma F."/>
            <person name="Heiman D."/>
            <person name="Young S."/>
            <person name="Gnerre S."/>
            <person name="Johnson J."/>
            <person name="Lander E.S."/>
            <person name="Lindblad-Toh K."/>
        </authorList>
    </citation>
    <scope>NUCLEOTIDE SEQUENCE [LARGE SCALE GENOMIC DNA]</scope>
    <source>
        <strain evidence="10">Thorbecke</strain>
    </source>
</reference>
<reference evidence="9" key="2">
    <citation type="journal article" date="2011" name="J. Biol. Chem.">
        <title>FXYD proteins reverse inhibition of the Na+-K+ pump mediated by glutathionylation of its beta1 subunit.</title>
        <authorList>
            <person name="Bibert S."/>
            <person name="Liu C.C."/>
            <person name="Figtree G.A."/>
            <person name="Garcia A."/>
            <person name="Hamilton E.J."/>
            <person name="Marassi F.M."/>
            <person name="Sweadner K.J."/>
            <person name="Cornelius F."/>
            <person name="Geering K."/>
            <person name="Rasmussen H.H."/>
        </authorList>
    </citation>
    <scope>TISSUE SPECIFICITY</scope>
    <scope>GLUTATHIONYLATION</scope>
</reference>
<gene>
    <name evidence="1" type="primary">FXYD1</name>
    <name evidence="1" type="synonym">PLM</name>
</gene>
<comment type="function">
    <text evidence="2 3 5">Associates with and regulates the activity of the sodium/potassium-transporting ATPase (NKA) which transports Na(+) out of the cell and K(+) into the cell. Inhibits NKA activity in its unphosphorylated state and stimulates activity when phosphorylated. Reduces glutathionylation of the NKA beta-1 subunit ATP1B1, thus reversing glutathionylation-mediated inhibition of ATP1B1. Contributes to female sexual development by maintaining the excitability of neurons which secrete gonadotropin-releasing hormone.</text>
</comment>
<comment type="subunit">
    <text evidence="1 2 3 4 5">Homotetramer. Monomer. Regulatory subunit of the sodium/potassium-transporting ATPase (NKA) which is composed of a catalytic alpha subunit, a non-catalytic beta subunit and an additional regulatory subunit. The monomeric form associates with NKA while the oligomeric form does not. Interacts with the catalytic alpha-1 subunit ATP1A1. Also interacts with the catalytic alpha-2 and alpha-3 subunits ATP1A2 and ATP1A3. Very little interaction with ATP1A1, ATP1A2 or ATP1A3 when phosphorylated at Ser-83. Interacts with the non-catalytic beta-1 subunit ATP1B1. Oxidative stress decreases interaction with ATP1A1 but increases interaction with ATP1B1.</text>
</comment>
<comment type="subcellular location">
    <subcellularLocation>
        <location evidence="3">Cell membrane</location>
        <location evidence="3">Sarcolemma</location>
        <topology evidence="6">Single-pass type I membrane protein</topology>
    </subcellularLocation>
    <subcellularLocation>
        <location evidence="2">Apical cell membrane</location>
        <topology evidence="6">Single-pass type I membrane protein</topology>
    </subcellularLocation>
    <subcellularLocation>
        <location evidence="2">Membrane</location>
        <location evidence="2">Caveola</location>
    </subcellularLocation>
    <subcellularLocation>
        <location evidence="2">Cell membrane</location>
        <location evidence="2">Sarcolemma</location>
        <location evidence="2">T-tubule</location>
    </subcellularLocation>
    <text evidence="2">Detected in the apical cell membrane in brain. In myocytes, localizes to sarcolemma, t-tubules and intercalated disks.</text>
</comment>
<comment type="tissue specificity">
    <text evidence="8">Expressed in ventricular myocytes (at protein level).</text>
</comment>
<comment type="domain">
    <text evidence="2">The cytoplasmic domain is sufficient to regulate sodium/potassium-transporting ATPase activity.</text>
</comment>
<comment type="PTM">
    <text evidence="1 2 3">Major plasma membrane substrate for cAMP-dependent protein kinase (PKA) and protein kinase C (PKC) in several different tissues. Phosphorylated in response to insulin and adrenergic stimulation. Phosphorylation at Ser-88 stimulates sodium/potassium-transporting ATPase activity while the unphosphorylated form inhibits sodium/potassium-transporting ATPase activity. Phosphorylation increases tetramerization, decreases binding to ATP1A1 and reduces inhibition of ATP1A1 activity. Phosphorylation at Ser-83 leads to greatly reduced interaction with ATP1A1, ATP1A2 and ATP1A3. May be phosphorylated by DMPK.</text>
</comment>
<comment type="PTM">
    <text evidence="1">Palmitoylation increases half-life and stability and is enhanced upon phosphorylation at Ser-88 by PKA.</text>
</comment>
<comment type="PTM">
    <text evidence="8">Glutathionylated.</text>
</comment>
<comment type="similarity">
    <text evidence="9">Belongs to the FXYD family.</text>
</comment>
<comment type="caution">
    <text evidence="9">The glutathionylation site found in orthologs is not conserved here, possibly due to a gene model error, but the protein has been shown to be glutathionylated.</text>
</comment>
<protein>
    <recommendedName>
        <fullName evidence="3">Phospholemman</fullName>
    </recommendedName>
    <alternativeName>
        <fullName evidence="1">FXYD domain-containing ion transport regulator 1</fullName>
    </alternativeName>
    <alternativeName>
        <fullName evidence="9">Sodium/potassium-transporting ATPase subunit FXYD1</fullName>
    </alternativeName>
</protein>
<sequence>MAYLHHTLLVCMGLLAMANAEAPQEQDPFTYDYQSLRIGGLIIAGILFILGILIILKRGAWERFDTARRTGEPDEEEGTFRSSIRRLSTRRR</sequence>
<evidence type="ECO:0000250" key="1">
    <source>
        <dbReference type="UniProtKB" id="O00168"/>
    </source>
</evidence>
<evidence type="ECO:0000250" key="2">
    <source>
        <dbReference type="UniProtKB" id="O08589"/>
    </source>
</evidence>
<evidence type="ECO:0000250" key="3">
    <source>
        <dbReference type="UniProtKB" id="P56513"/>
    </source>
</evidence>
<evidence type="ECO:0000250" key="4">
    <source>
        <dbReference type="UniProtKB" id="Q3SZX0"/>
    </source>
</evidence>
<evidence type="ECO:0000250" key="5">
    <source>
        <dbReference type="UniProtKB" id="Q9Z239"/>
    </source>
</evidence>
<evidence type="ECO:0000255" key="6"/>
<evidence type="ECO:0000256" key="7">
    <source>
        <dbReference type="SAM" id="MobiDB-lite"/>
    </source>
</evidence>
<evidence type="ECO:0000269" key="8">
    <source>
    </source>
</evidence>
<evidence type="ECO:0000305" key="9"/>
<evidence type="ECO:0000312" key="10">
    <source>
        <dbReference type="Proteomes" id="UP000001811"/>
    </source>
</evidence>
<organism evidence="10">
    <name type="scientific">Oryctolagus cuniculus</name>
    <name type="common">Rabbit</name>
    <dbReference type="NCBI Taxonomy" id="9986"/>
    <lineage>
        <taxon>Eukaryota</taxon>
        <taxon>Metazoa</taxon>
        <taxon>Chordata</taxon>
        <taxon>Craniata</taxon>
        <taxon>Vertebrata</taxon>
        <taxon>Euteleostomi</taxon>
        <taxon>Mammalia</taxon>
        <taxon>Eutheria</taxon>
        <taxon>Euarchontoglires</taxon>
        <taxon>Glires</taxon>
        <taxon>Lagomorpha</taxon>
        <taxon>Leporidae</taxon>
        <taxon>Oryctolagus</taxon>
    </lineage>
</organism>